<accession>Q8M998</accession>
<comment type="function">
    <text evidence="1">Usually encoded in the trnK tRNA gene intron. Probably assists in splicing its own and other chloroplast group II introns.</text>
</comment>
<comment type="subcellular location">
    <subcellularLocation>
        <location>Plastid</location>
        <location>Chloroplast</location>
    </subcellularLocation>
</comment>
<comment type="similarity">
    <text evidence="1">Belongs to the intron maturase 2 family. MatK subfamily.</text>
</comment>
<organism>
    <name type="scientific">Olea europaea</name>
    <name type="common">Common olive</name>
    <dbReference type="NCBI Taxonomy" id="4146"/>
    <lineage>
        <taxon>Eukaryota</taxon>
        <taxon>Viridiplantae</taxon>
        <taxon>Streptophyta</taxon>
        <taxon>Embryophyta</taxon>
        <taxon>Tracheophyta</taxon>
        <taxon>Spermatophyta</taxon>
        <taxon>Magnoliopsida</taxon>
        <taxon>eudicotyledons</taxon>
        <taxon>Gunneridae</taxon>
        <taxon>Pentapetalae</taxon>
        <taxon>asterids</taxon>
        <taxon>lamiids</taxon>
        <taxon>Lamiales</taxon>
        <taxon>Oleaceae</taxon>
        <taxon>Oleeae</taxon>
        <taxon>Olea</taxon>
    </lineage>
</organism>
<keyword id="KW-0150">Chloroplast</keyword>
<keyword id="KW-0507">mRNA processing</keyword>
<keyword id="KW-0934">Plastid</keyword>
<keyword id="KW-0694">RNA-binding</keyword>
<keyword id="KW-0819">tRNA processing</keyword>
<feature type="chain" id="PRO_0000143557" description="Maturase K">
    <location>
        <begin position="1"/>
        <end position="506"/>
    </location>
</feature>
<dbReference type="EMBL" id="AJ429335">
    <property type="protein sequence ID" value="CAD22231.1"/>
    <property type="molecule type" value="Genomic_DNA"/>
</dbReference>
<dbReference type="GO" id="GO:0009507">
    <property type="term" value="C:chloroplast"/>
    <property type="evidence" value="ECO:0007669"/>
    <property type="project" value="UniProtKB-SubCell"/>
</dbReference>
<dbReference type="GO" id="GO:0003723">
    <property type="term" value="F:RNA binding"/>
    <property type="evidence" value="ECO:0007669"/>
    <property type="project" value="UniProtKB-KW"/>
</dbReference>
<dbReference type="GO" id="GO:0006397">
    <property type="term" value="P:mRNA processing"/>
    <property type="evidence" value="ECO:0007669"/>
    <property type="project" value="UniProtKB-KW"/>
</dbReference>
<dbReference type="GO" id="GO:0008380">
    <property type="term" value="P:RNA splicing"/>
    <property type="evidence" value="ECO:0007669"/>
    <property type="project" value="UniProtKB-UniRule"/>
</dbReference>
<dbReference type="GO" id="GO:0008033">
    <property type="term" value="P:tRNA processing"/>
    <property type="evidence" value="ECO:0007669"/>
    <property type="project" value="UniProtKB-KW"/>
</dbReference>
<dbReference type="HAMAP" id="MF_01390">
    <property type="entry name" value="MatK"/>
    <property type="match status" value="1"/>
</dbReference>
<dbReference type="InterPro" id="IPR024937">
    <property type="entry name" value="Domain_X"/>
</dbReference>
<dbReference type="InterPro" id="IPR002866">
    <property type="entry name" value="Maturase_MatK"/>
</dbReference>
<dbReference type="InterPro" id="IPR024942">
    <property type="entry name" value="Maturase_MatK_N"/>
</dbReference>
<dbReference type="PANTHER" id="PTHR34811">
    <property type="entry name" value="MATURASE K"/>
    <property type="match status" value="1"/>
</dbReference>
<dbReference type="PANTHER" id="PTHR34811:SF1">
    <property type="entry name" value="MATURASE K"/>
    <property type="match status" value="1"/>
</dbReference>
<dbReference type="Pfam" id="PF01348">
    <property type="entry name" value="Intron_maturas2"/>
    <property type="match status" value="1"/>
</dbReference>
<dbReference type="Pfam" id="PF01824">
    <property type="entry name" value="MatK_N"/>
    <property type="match status" value="1"/>
</dbReference>
<name>MATK_OLEEU</name>
<gene>
    <name evidence="1" type="primary">matK</name>
</gene>
<geneLocation type="chloroplast"/>
<evidence type="ECO:0000255" key="1">
    <source>
        <dbReference type="HAMAP-Rule" id="MF_01390"/>
    </source>
</evidence>
<reference key="1">
    <citation type="journal article" date="2002" name="Mol. Phylogenet. Evol.">
        <title>Phylogenetics of asterids based on 3 coding and 3 non-coding chloroplast DNA markers and the utility of non-coding DNA at higher taxonomic levels.</title>
        <authorList>
            <person name="Bremer B."/>
            <person name="Bremer K."/>
            <person name="Heidari N."/>
            <person name="Erixon P."/>
            <person name="Olmstead R.G."/>
            <person name="Anderberg A.A."/>
            <person name="Kallersjo M."/>
            <person name="Barkhordarian E."/>
        </authorList>
    </citation>
    <scope>NUCLEOTIDE SEQUENCE [GENOMIC DNA]</scope>
</reference>
<proteinExistence type="inferred from homology"/>
<protein>
    <recommendedName>
        <fullName evidence="1">Maturase K</fullName>
    </recommendedName>
    <alternativeName>
        <fullName evidence="1">Intron maturase</fullName>
    </alternativeName>
</protein>
<sequence>MEEIQRYLQLDRSQQHDFLYPLIFQEYIYGLAHDQGFNRWILLENPGYDNKSSLLIVKRLITQMYQQNHFLISANDSNQNPFLGRNKNLYPQIISEGFAFIVEIPFSLRLILSLEGKKKKIVKSHNLRSIHSIFPFLEDNFSHLNFVLDILIPHPIHLEILVQTLRYWVKDASSLHLLRFFLHEYCNWNSLITPKKASSSFSKRNQRLFFFLYNSHVCEYESIFVFLRNQSSHLRSTSSRALLERIYFYGKIERLVDVFVKDFQTNLCLFKDPFMHYVRYQGKSILASKGTPLLMNKWKYYLVTFWQCYFSLWFHPRRIYLNQLSNHSLEFVGYLSSVRLNASVVRSQILENSFLINNAIKKFDTLVPIIPLIGSLAKAKFCNVLGYPISKPVRADLSDSDIIDRFGRICRNLSHYHSGSSKKKSLYRIKYILRLSCARTLARKHKSTVRAFLKKLGSELLEEFLMSEEQVLSLTFPKASSTLRGVYRSRIWYLDIICINDLINQK</sequence>